<proteinExistence type="inferred from homology"/>
<evidence type="ECO:0000255" key="1">
    <source>
        <dbReference type="HAMAP-Rule" id="MF_00514"/>
    </source>
</evidence>
<evidence type="ECO:0000256" key="2">
    <source>
        <dbReference type="SAM" id="MobiDB-lite"/>
    </source>
</evidence>
<evidence type="ECO:0000305" key="3"/>
<feature type="chain" id="PRO_1000050716" description="Large ribosomal subunit protein bL35">
    <location>
        <begin position="1"/>
        <end position="67"/>
    </location>
</feature>
<feature type="region of interest" description="Disordered" evidence="2">
    <location>
        <begin position="1"/>
        <end position="22"/>
    </location>
</feature>
<feature type="compositionally biased region" description="Basic residues" evidence="2">
    <location>
        <begin position="1"/>
        <end position="16"/>
    </location>
</feature>
<organism>
    <name type="scientific">Methylibium petroleiphilum (strain ATCC BAA-1232 / LMG 22953 / PM1)</name>
    <dbReference type="NCBI Taxonomy" id="420662"/>
    <lineage>
        <taxon>Bacteria</taxon>
        <taxon>Pseudomonadati</taxon>
        <taxon>Pseudomonadota</taxon>
        <taxon>Betaproteobacteria</taxon>
        <taxon>Burkholderiales</taxon>
        <taxon>Sphaerotilaceae</taxon>
        <taxon>Methylibium</taxon>
    </lineage>
</organism>
<accession>A2SH05</accession>
<gene>
    <name evidence="1" type="primary">rpmI</name>
    <name type="ordered locus">Mpe_A1886</name>
</gene>
<reference key="1">
    <citation type="journal article" date="2007" name="J. Bacteriol.">
        <title>Whole-genome analysis of the methyl tert-butyl ether-degrading beta-proteobacterium Methylibium petroleiphilum PM1.</title>
        <authorList>
            <person name="Kane S.R."/>
            <person name="Chakicherla A.Y."/>
            <person name="Chain P.S.G."/>
            <person name="Schmidt R."/>
            <person name="Shin M.W."/>
            <person name="Legler T.C."/>
            <person name="Scow K.M."/>
            <person name="Larimer F.W."/>
            <person name="Lucas S.M."/>
            <person name="Richardson P.M."/>
            <person name="Hristova K.R."/>
        </authorList>
    </citation>
    <scope>NUCLEOTIDE SEQUENCE [LARGE SCALE GENOMIC DNA]</scope>
    <source>
        <strain>ATCC BAA-1232 / LMG 22953 / PM1</strain>
    </source>
</reference>
<protein>
    <recommendedName>
        <fullName evidence="1">Large ribosomal subunit protein bL35</fullName>
    </recommendedName>
    <alternativeName>
        <fullName evidence="3">50S ribosomal protein L35</fullName>
    </alternativeName>
</protein>
<name>RL35_METPP</name>
<keyword id="KW-1185">Reference proteome</keyword>
<keyword id="KW-0687">Ribonucleoprotein</keyword>
<keyword id="KW-0689">Ribosomal protein</keyword>
<dbReference type="EMBL" id="CP000555">
    <property type="protein sequence ID" value="ABM94844.1"/>
    <property type="molecule type" value="Genomic_DNA"/>
</dbReference>
<dbReference type="RefSeq" id="WP_011829481.1">
    <property type="nucleotide sequence ID" value="NC_008825.1"/>
</dbReference>
<dbReference type="SMR" id="A2SH05"/>
<dbReference type="STRING" id="420662.Mpe_A1886"/>
<dbReference type="KEGG" id="mpt:Mpe_A1886"/>
<dbReference type="eggNOG" id="COG0291">
    <property type="taxonomic scope" value="Bacteria"/>
</dbReference>
<dbReference type="HOGENOM" id="CLU_169643_1_0_4"/>
<dbReference type="Proteomes" id="UP000000366">
    <property type="component" value="Chromosome"/>
</dbReference>
<dbReference type="GO" id="GO:0022625">
    <property type="term" value="C:cytosolic large ribosomal subunit"/>
    <property type="evidence" value="ECO:0007669"/>
    <property type="project" value="TreeGrafter"/>
</dbReference>
<dbReference type="GO" id="GO:0003735">
    <property type="term" value="F:structural constituent of ribosome"/>
    <property type="evidence" value="ECO:0007669"/>
    <property type="project" value="InterPro"/>
</dbReference>
<dbReference type="GO" id="GO:0006412">
    <property type="term" value="P:translation"/>
    <property type="evidence" value="ECO:0007669"/>
    <property type="project" value="UniProtKB-UniRule"/>
</dbReference>
<dbReference type="FunFam" id="4.10.410.60:FF:000001">
    <property type="entry name" value="50S ribosomal protein L35"/>
    <property type="match status" value="1"/>
</dbReference>
<dbReference type="Gene3D" id="4.10.410.60">
    <property type="match status" value="1"/>
</dbReference>
<dbReference type="HAMAP" id="MF_00514">
    <property type="entry name" value="Ribosomal_bL35"/>
    <property type="match status" value="1"/>
</dbReference>
<dbReference type="InterPro" id="IPR001706">
    <property type="entry name" value="Ribosomal_bL35"/>
</dbReference>
<dbReference type="InterPro" id="IPR021137">
    <property type="entry name" value="Ribosomal_bL35-like"/>
</dbReference>
<dbReference type="InterPro" id="IPR018265">
    <property type="entry name" value="Ribosomal_bL35_CS"/>
</dbReference>
<dbReference type="InterPro" id="IPR037229">
    <property type="entry name" value="Ribosomal_bL35_sf"/>
</dbReference>
<dbReference type="NCBIfam" id="TIGR00001">
    <property type="entry name" value="rpmI_bact"/>
    <property type="match status" value="1"/>
</dbReference>
<dbReference type="PANTHER" id="PTHR33343">
    <property type="entry name" value="54S RIBOSOMAL PROTEIN BL35M"/>
    <property type="match status" value="1"/>
</dbReference>
<dbReference type="PANTHER" id="PTHR33343:SF1">
    <property type="entry name" value="LARGE RIBOSOMAL SUBUNIT PROTEIN BL35M"/>
    <property type="match status" value="1"/>
</dbReference>
<dbReference type="Pfam" id="PF01632">
    <property type="entry name" value="Ribosomal_L35p"/>
    <property type="match status" value="1"/>
</dbReference>
<dbReference type="PRINTS" id="PR00064">
    <property type="entry name" value="RIBOSOMALL35"/>
</dbReference>
<dbReference type="SUPFAM" id="SSF143034">
    <property type="entry name" value="L35p-like"/>
    <property type="match status" value="1"/>
</dbReference>
<dbReference type="PROSITE" id="PS00936">
    <property type="entry name" value="RIBOSOMAL_L35"/>
    <property type="match status" value="1"/>
</dbReference>
<comment type="similarity">
    <text evidence="1">Belongs to the bacterial ribosomal protein bL35 family.</text>
</comment>
<sequence>MPKMKTKKSAAKRFRVRPGGTVKRGQAFKRHILTKKSTKNKRHLRGTATVHETNMGHMAQMLPFAGL</sequence>